<evidence type="ECO:0000250" key="1">
    <source>
        <dbReference type="UniProtKB" id="P38182"/>
    </source>
</evidence>
<evidence type="ECO:0000250" key="2">
    <source>
        <dbReference type="UniProtKB" id="Q2XPP5"/>
    </source>
</evidence>
<evidence type="ECO:0000250" key="3">
    <source>
        <dbReference type="UniProtKB" id="Q8LEM4"/>
    </source>
</evidence>
<evidence type="ECO:0000269" key="4">
    <source>
    </source>
</evidence>
<evidence type="ECO:0000269" key="5">
    <source>
    </source>
</evidence>
<evidence type="ECO:0000269" key="6">
    <source>
    </source>
</evidence>
<evidence type="ECO:0000305" key="7"/>
<accession>Q9SL04</accession>
<accession>Q8LBA9</accession>
<protein>
    <recommendedName>
        <fullName>Autophagy-related protein 8d</fullName>
    </recommendedName>
    <alternativeName>
        <fullName>Autophagy-related ubiquitin-like modifier ATG8d</fullName>
        <shortName>AtAPG8d</shortName>
        <shortName>Protein autophagy 8d</shortName>
    </alternativeName>
</protein>
<gene>
    <name type="primary">ATG8D</name>
    <name type="synonym">APG8D</name>
    <name type="ordered locus">At2g05630</name>
    <name type="ORF">T20G20.2</name>
</gene>
<comment type="function">
    <text evidence="1">Ubiquitin-like modifier involved in autophagosomes formation. May mediate the delivery of the autophagosomes to the vacuole via the microtubule cytoskeleton.</text>
</comment>
<comment type="subunit">
    <text evidence="4 6">Interacts with ATG4B (PubMed:15178341). Interacts with NBR1 (PubMed:21606687).</text>
</comment>
<comment type="subcellular location">
    <subcellularLocation>
        <location evidence="1">Cytoplasmic vesicle</location>
        <location evidence="1">Autophagosome membrane</location>
        <topology evidence="1">Lipid-anchor</topology>
    </subcellularLocation>
    <subcellularLocation>
        <location evidence="1">Vacuole membrane</location>
        <topology evidence="1">Lipid-anchor</topology>
    </subcellularLocation>
    <subcellularLocation>
        <location evidence="3">Cytoplasm</location>
        <location evidence="3">Cytoskeleton</location>
    </subcellularLocation>
</comment>
<comment type="alternative products">
    <event type="alternative splicing"/>
    <isoform>
        <id>Q9SL04-1</id>
        <name>1</name>
        <sequence type="displayed"/>
    </isoform>
    <text>A number of isoforms are produced. According to EST sequences.</text>
</comment>
<comment type="tissue specificity">
    <text evidence="5">Constitutively expressed.</text>
</comment>
<comment type="PTM">
    <text evidence="1">The C-terminal 3 residues are removed by ATG4 to expose Gly-117 at the C-terminus. This Gly-117 forms then a thioester bond with the 'Cys-558' of ATG7 (E1-like activating enzyme) before being transferred to the 'Cys-258' of ATG3 (the specific E2 conjugating enzyme), in order to be finally amidated with phosphatidylethanolamine. This lipid modification anchors ATG8 to autophagosomes.</text>
</comment>
<comment type="similarity">
    <text evidence="7">Belongs to the ATG8 family.</text>
</comment>
<dbReference type="EMBL" id="AB073178">
    <property type="protein sequence ID" value="BAB88390.1"/>
    <property type="molecule type" value="mRNA"/>
</dbReference>
<dbReference type="EMBL" id="AC006220">
    <property type="protein sequence ID" value="AAD24645.1"/>
    <property type="molecule type" value="Genomic_DNA"/>
</dbReference>
<dbReference type="EMBL" id="CP002685">
    <property type="protein sequence ID" value="AEC05958.1"/>
    <property type="molecule type" value="Genomic_DNA"/>
</dbReference>
<dbReference type="EMBL" id="BT003090">
    <property type="protein sequence ID" value="AAO23655.1"/>
    <property type="molecule type" value="mRNA"/>
</dbReference>
<dbReference type="EMBL" id="AK227339">
    <property type="protein sequence ID" value="BAE99350.1"/>
    <property type="molecule type" value="mRNA"/>
</dbReference>
<dbReference type="EMBL" id="AY087320">
    <property type="protein sequence ID" value="AAM64870.1"/>
    <property type="molecule type" value="mRNA"/>
</dbReference>
<dbReference type="PIR" id="H84470">
    <property type="entry name" value="H84470"/>
</dbReference>
<dbReference type="RefSeq" id="NP_178631.1">
    <molecule id="Q9SL04-1"/>
    <property type="nucleotide sequence ID" value="NM_126586.4"/>
</dbReference>
<dbReference type="SMR" id="Q9SL04"/>
<dbReference type="BioGRID" id="512">
    <property type="interactions" value="14"/>
</dbReference>
<dbReference type="FunCoup" id="Q9SL04">
    <property type="interactions" value="2825"/>
</dbReference>
<dbReference type="IntAct" id="Q9SL04">
    <property type="interactions" value="11"/>
</dbReference>
<dbReference type="STRING" id="3702.Q9SL04"/>
<dbReference type="ProteomicsDB" id="246548">
    <molecule id="Q9SL04-1"/>
</dbReference>
<dbReference type="EnsemblPlants" id="AT2G05630.1">
    <molecule id="Q9SL04-1"/>
    <property type="protein sequence ID" value="AT2G05630.1"/>
    <property type="gene ID" value="AT2G05630"/>
</dbReference>
<dbReference type="GeneID" id="815112"/>
<dbReference type="Gramene" id="AT2G05630.1">
    <molecule id="Q9SL04-1"/>
    <property type="protein sequence ID" value="AT2G05630.1"/>
    <property type="gene ID" value="AT2G05630"/>
</dbReference>
<dbReference type="KEGG" id="ath:AT2G05630"/>
<dbReference type="Araport" id="AT2G05630"/>
<dbReference type="TAIR" id="AT2G05630">
    <property type="gene designation" value="ATG8D"/>
</dbReference>
<dbReference type="HOGENOM" id="CLU_119276_0_1_1"/>
<dbReference type="InParanoid" id="Q9SL04"/>
<dbReference type="OMA" id="NEHHEED"/>
<dbReference type="PhylomeDB" id="Q9SL04"/>
<dbReference type="PRO" id="PR:Q9SL04"/>
<dbReference type="Proteomes" id="UP000006548">
    <property type="component" value="Chromosome 2"/>
</dbReference>
<dbReference type="ExpressionAtlas" id="Q9SL04">
    <property type="expression patterns" value="baseline and differential"/>
</dbReference>
<dbReference type="GO" id="GO:0000421">
    <property type="term" value="C:autophagosome membrane"/>
    <property type="evidence" value="ECO:0007669"/>
    <property type="project" value="UniProtKB-SubCell"/>
</dbReference>
<dbReference type="GO" id="GO:0031410">
    <property type="term" value="C:cytoplasmic vesicle"/>
    <property type="evidence" value="ECO:0007669"/>
    <property type="project" value="UniProtKB-KW"/>
</dbReference>
<dbReference type="GO" id="GO:0005874">
    <property type="term" value="C:microtubule"/>
    <property type="evidence" value="ECO:0007669"/>
    <property type="project" value="UniProtKB-KW"/>
</dbReference>
<dbReference type="GO" id="GO:0006914">
    <property type="term" value="P:autophagy"/>
    <property type="evidence" value="ECO:0007669"/>
    <property type="project" value="UniProtKB-KW"/>
</dbReference>
<dbReference type="GO" id="GO:0015031">
    <property type="term" value="P:protein transport"/>
    <property type="evidence" value="ECO:0007669"/>
    <property type="project" value="UniProtKB-KW"/>
</dbReference>
<dbReference type="CDD" id="cd16128">
    <property type="entry name" value="Ubl_ATG8"/>
    <property type="match status" value="1"/>
</dbReference>
<dbReference type="FunFam" id="3.10.20.90:FF:000010">
    <property type="entry name" value="Autophagy-related protein"/>
    <property type="match status" value="1"/>
</dbReference>
<dbReference type="Gene3D" id="3.10.20.90">
    <property type="entry name" value="Phosphatidylinositol 3-kinase Catalytic Subunit, Chain A, domain 1"/>
    <property type="match status" value="1"/>
</dbReference>
<dbReference type="InterPro" id="IPR004241">
    <property type="entry name" value="Atg8-like"/>
</dbReference>
<dbReference type="InterPro" id="IPR029071">
    <property type="entry name" value="Ubiquitin-like_domsf"/>
</dbReference>
<dbReference type="PANTHER" id="PTHR10969">
    <property type="entry name" value="MICROTUBULE-ASSOCIATED PROTEINS 1A/1B LIGHT CHAIN 3-RELATED"/>
    <property type="match status" value="1"/>
</dbReference>
<dbReference type="Pfam" id="PF02991">
    <property type="entry name" value="ATG8"/>
    <property type="match status" value="1"/>
</dbReference>
<dbReference type="SUPFAM" id="SSF54236">
    <property type="entry name" value="Ubiquitin-like"/>
    <property type="match status" value="1"/>
</dbReference>
<reference key="1">
    <citation type="journal article" date="2002" name="Plant Physiol.">
        <title>Leaf senescence and starvation-induced chlorosis are accelerated by the disruption of an Arabidopsis autophagy gene.</title>
        <authorList>
            <person name="Hanaoka H."/>
            <person name="Noda T."/>
            <person name="Shirano Y."/>
            <person name="Kato T."/>
            <person name="Hayashi H."/>
            <person name="Shibata D."/>
            <person name="Tabata S."/>
            <person name="Ohsumi Y."/>
        </authorList>
    </citation>
    <scope>NUCLEOTIDE SEQUENCE [MRNA]</scope>
    <scope>NOMENCLATURE</scope>
    <scope>GENE FAMILY</scope>
</reference>
<reference key="2">
    <citation type="journal article" date="1999" name="Nature">
        <title>Sequence and analysis of chromosome 2 of the plant Arabidopsis thaliana.</title>
        <authorList>
            <person name="Lin X."/>
            <person name="Kaul S."/>
            <person name="Rounsley S.D."/>
            <person name="Shea T.P."/>
            <person name="Benito M.-I."/>
            <person name="Town C.D."/>
            <person name="Fujii C.Y."/>
            <person name="Mason T.M."/>
            <person name="Bowman C.L."/>
            <person name="Barnstead M.E."/>
            <person name="Feldblyum T.V."/>
            <person name="Buell C.R."/>
            <person name="Ketchum K.A."/>
            <person name="Lee J.J."/>
            <person name="Ronning C.M."/>
            <person name="Koo H.L."/>
            <person name="Moffat K.S."/>
            <person name="Cronin L.A."/>
            <person name="Shen M."/>
            <person name="Pai G."/>
            <person name="Van Aken S."/>
            <person name="Umayam L."/>
            <person name="Tallon L.J."/>
            <person name="Gill J.E."/>
            <person name="Adams M.D."/>
            <person name="Carrera A.J."/>
            <person name="Creasy T.H."/>
            <person name="Goodman H.M."/>
            <person name="Somerville C.R."/>
            <person name="Copenhaver G.P."/>
            <person name="Preuss D."/>
            <person name="Nierman W.C."/>
            <person name="White O."/>
            <person name="Eisen J.A."/>
            <person name="Salzberg S.L."/>
            <person name="Fraser C.M."/>
            <person name="Venter J.C."/>
        </authorList>
    </citation>
    <scope>NUCLEOTIDE SEQUENCE [LARGE SCALE GENOMIC DNA]</scope>
    <source>
        <strain>cv. Columbia</strain>
    </source>
</reference>
<reference key="3">
    <citation type="journal article" date="2017" name="Plant J.">
        <title>Araport11: a complete reannotation of the Arabidopsis thaliana reference genome.</title>
        <authorList>
            <person name="Cheng C.Y."/>
            <person name="Krishnakumar V."/>
            <person name="Chan A.P."/>
            <person name="Thibaud-Nissen F."/>
            <person name="Schobel S."/>
            <person name="Town C.D."/>
        </authorList>
    </citation>
    <scope>GENOME REANNOTATION</scope>
    <source>
        <strain>cv. Columbia</strain>
    </source>
</reference>
<reference key="4">
    <citation type="journal article" date="2003" name="Science">
        <title>Empirical analysis of transcriptional activity in the Arabidopsis genome.</title>
        <authorList>
            <person name="Yamada K."/>
            <person name="Lim J."/>
            <person name="Dale J.M."/>
            <person name="Chen H."/>
            <person name="Shinn P."/>
            <person name="Palm C.J."/>
            <person name="Southwick A.M."/>
            <person name="Wu H.C."/>
            <person name="Kim C.J."/>
            <person name="Nguyen M."/>
            <person name="Pham P.K."/>
            <person name="Cheuk R.F."/>
            <person name="Karlin-Newmann G."/>
            <person name="Liu S.X."/>
            <person name="Lam B."/>
            <person name="Sakano H."/>
            <person name="Wu T."/>
            <person name="Yu G."/>
            <person name="Miranda M."/>
            <person name="Quach H.L."/>
            <person name="Tripp M."/>
            <person name="Chang C.H."/>
            <person name="Lee J.M."/>
            <person name="Toriumi M.J."/>
            <person name="Chan M.M."/>
            <person name="Tang C.C."/>
            <person name="Onodera C.S."/>
            <person name="Deng J.M."/>
            <person name="Akiyama K."/>
            <person name="Ansari Y."/>
            <person name="Arakawa T."/>
            <person name="Banh J."/>
            <person name="Banno F."/>
            <person name="Bowser L."/>
            <person name="Brooks S.Y."/>
            <person name="Carninci P."/>
            <person name="Chao Q."/>
            <person name="Choy N."/>
            <person name="Enju A."/>
            <person name="Goldsmith A.D."/>
            <person name="Gurjal M."/>
            <person name="Hansen N.F."/>
            <person name="Hayashizaki Y."/>
            <person name="Johnson-Hopson C."/>
            <person name="Hsuan V.W."/>
            <person name="Iida K."/>
            <person name="Karnes M."/>
            <person name="Khan S."/>
            <person name="Koesema E."/>
            <person name="Ishida J."/>
            <person name="Jiang P.X."/>
            <person name="Jones T."/>
            <person name="Kawai J."/>
            <person name="Kamiya A."/>
            <person name="Meyers C."/>
            <person name="Nakajima M."/>
            <person name="Narusaka M."/>
            <person name="Seki M."/>
            <person name="Sakurai T."/>
            <person name="Satou M."/>
            <person name="Tamse R."/>
            <person name="Vaysberg M."/>
            <person name="Wallender E.K."/>
            <person name="Wong C."/>
            <person name="Yamamura Y."/>
            <person name="Yuan S."/>
            <person name="Shinozaki K."/>
            <person name="Davis R.W."/>
            <person name="Theologis A."/>
            <person name="Ecker J.R."/>
        </authorList>
    </citation>
    <scope>NUCLEOTIDE SEQUENCE [LARGE SCALE MRNA]</scope>
    <source>
        <strain>cv. Columbia</strain>
    </source>
</reference>
<reference key="5">
    <citation type="submission" date="2006-07" db="EMBL/GenBank/DDBJ databases">
        <title>Large-scale analysis of RIKEN Arabidopsis full-length (RAFL) cDNAs.</title>
        <authorList>
            <person name="Totoki Y."/>
            <person name="Seki M."/>
            <person name="Ishida J."/>
            <person name="Nakajima M."/>
            <person name="Enju A."/>
            <person name="Kamiya A."/>
            <person name="Narusaka M."/>
            <person name="Shin-i T."/>
            <person name="Nakagawa M."/>
            <person name="Sakamoto N."/>
            <person name="Oishi K."/>
            <person name="Kohara Y."/>
            <person name="Kobayashi M."/>
            <person name="Toyoda A."/>
            <person name="Sakaki Y."/>
            <person name="Sakurai T."/>
            <person name="Iida K."/>
            <person name="Akiyama K."/>
            <person name="Satou M."/>
            <person name="Toyoda T."/>
            <person name="Konagaya A."/>
            <person name="Carninci P."/>
            <person name="Kawai J."/>
            <person name="Hayashizaki Y."/>
            <person name="Shinozaki K."/>
        </authorList>
    </citation>
    <scope>NUCLEOTIDE SEQUENCE [LARGE SCALE MRNA]</scope>
    <source>
        <strain>cv. Columbia</strain>
    </source>
</reference>
<reference key="6">
    <citation type="submission" date="2002-03" db="EMBL/GenBank/DDBJ databases">
        <title>Full-length cDNA from Arabidopsis thaliana.</title>
        <authorList>
            <person name="Brover V.V."/>
            <person name="Troukhan M.E."/>
            <person name="Alexandrov N.A."/>
            <person name="Lu Y.-P."/>
            <person name="Flavell R.B."/>
            <person name="Feldmann K.A."/>
        </authorList>
    </citation>
    <scope>NUCLEOTIDE SEQUENCE [LARGE SCALE MRNA]</scope>
</reference>
<reference key="7">
    <citation type="journal article" date="2004" name="FEBS Lett.">
        <title>Arabidopsis homologues of the autophagy protein Atg8 are a novel family of microtubule binding proteins.</title>
        <authorList>
            <person name="Ketelaar T."/>
            <person name="Voss C."/>
            <person name="Dimmock S.A."/>
            <person name="Thumm M."/>
            <person name="Hussey P.J."/>
        </authorList>
    </citation>
    <scope>INTERACTION WITH ATG4B</scope>
    <scope>BINDING TO MICROTUBULES</scope>
</reference>
<reference key="8">
    <citation type="journal article" date="2004" name="Plant Cell">
        <title>Processing of ATG8s, ubiquitin-like proteins, and their deconjugation by ATG4s are essential for plant autophagy.</title>
        <authorList>
            <person name="Yoshimoto K."/>
            <person name="Hanaoka H."/>
            <person name="Sato S."/>
            <person name="Kato T."/>
            <person name="Tabata S."/>
            <person name="Noda T."/>
            <person name="Ohsumi Y."/>
        </authorList>
    </citation>
    <scope>TISSUE SPECIFICITY</scope>
</reference>
<reference key="9">
    <citation type="journal article" date="2011" name="Autophagy">
        <title>Plant NBR1 is a selective autophagy substrate and a functional hybrid of the mammalian autophagic adapters NBR1 and p62/SQSTM1.</title>
        <authorList>
            <person name="Svenning S."/>
            <person name="Lamark T."/>
            <person name="Krause K."/>
            <person name="Johansen T."/>
        </authorList>
    </citation>
    <scope>INTERACTION WITH NBR1</scope>
</reference>
<sequence>MAISSFKHEHPLEKRQAEAARIREKYPDRIPVIVERAEKSDVPDIDRKKYLVPADLTVGQFVYVVRKRIKLSPEKAIFIFVKNILPPTAAIMSAIYEEHKDEDGFLYMSYSGENTFGIFF</sequence>
<organism>
    <name type="scientific">Arabidopsis thaliana</name>
    <name type="common">Mouse-ear cress</name>
    <dbReference type="NCBI Taxonomy" id="3702"/>
    <lineage>
        <taxon>Eukaryota</taxon>
        <taxon>Viridiplantae</taxon>
        <taxon>Streptophyta</taxon>
        <taxon>Embryophyta</taxon>
        <taxon>Tracheophyta</taxon>
        <taxon>Spermatophyta</taxon>
        <taxon>Magnoliopsida</taxon>
        <taxon>eudicotyledons</taxon>
        <taxon>Gunneridae</taxon>
        <taxon>Pentapetalae</taxon>
        <taxon>rosids</taxon>
        <taxon>malvids</taxon>
        <taxon>Brassicales</taxon>
        <taxon>Brassicaceae</taxon>
        <taxon>Camelineae</taxon>
        <taxon>Arabidopsis</taxon>
    </lineage>
</organism>
<feature type="chain" id="PRO_0000286911" description="Autophagy-related protein 8d">
    <location>
        <begin position="1"/>
        <end position="117"/>
    </location>
</feature>
<feature type="propeptide" id="PRO_0000286912" description="Removed in mature form" evidence="2">
    <location>
        <begin position="118"/>
        <end position="120"/>
    </location>
</feature>
<feature type="site" description="Cleavage; by ATG4" evidence="2">
    <location>
        <begin position="117"/>
        <end position="118"/>
    </location>
</feature>
<feature type="lipid moiety-binding region" description="Phosphatidylethanolamine amidated glycine" evidence="1">
    <location>
        <position position="117"/>
    </location>
</feature>
<feature type="sequence conflict" description="In Ref. 6; AAM64870." evidence="7" ref="6">
    <original>R</original>
    <variation>K</variation>
    <location>
        <position position="47"/>
    </location>
</feature>
<proteinExistence type="evidence at protein level"/>
<keyword id="KW-0025">Alternative splicing</keyword>
<keyword id="KW-0072">Autophagy</keyword>
<keyword id="KW-0963">Cytoplasm</keyword>
<keyword id="KW-0968">Cytoplasmic vesicle</keyword>
<keyword id="KW-0206">Cytoskeleton</keyword>
<keyword id="KW-0449">Lipoprotein</keyword>
<keyword id="KW-0472">Membrane</keyword>
<keyword id="KW-0493">Microtubule</keyword>
<keyword id="KW-0653">Protein transport</keyword>
<keyword id="KW-1185">Reference proteome</keyword>
<keyword id="KW-0813">Transport</keyword>
<keyword id="KW-0833">Ubl conjugation pathway</keyword>
<keyword id="KW-0926">Vacuole</keyword>
<name>ATG8D_ARATH</name>